<comment type="function">
    <text evidence="1 6">Probable hormone (Probable). Promotes chemotaxis in myeloid cells (By similarity).</text>
</comment>
<comment type="subunit">
    <text evidence="1">Homodimer. Heterodimer with RETNLB.</text>
</comment>
<comment type="subcellular location">
    <subcellularLocation>
        <location evidence="1">Secreted</location>
    </subcellularLocation>
</comment>
<comment type="tissue specificity">
    <text evidence="4">Highly expressed in bone marrow, spleen and white blood cells. Also detected at low levels in thymus, lung, trachea, white adipose tissue, nasal respiratory epithelium, colon, small intestine, kidney, liver, and heart.</text>
</comment>
<comment type="similarity">
    <text evidence="6">Belongs to the resistin/FIZZ family.</text>
</comment>
<proteinExistence type="evidence at transcript level"/>
<sequence>MKTAICSLLICIFLLQLMVPVNTDGTLESIVEQKVKELLAHRDNCPSTVTKTLSCTSVKATGRLASCPPGMAVTGCACGYACGSWDIRDGTTCHCQCAVMDWATARCCQLS</sequence>
<gene>
    <name evidence="10" type="primary">Retnlg</name>
</gene>
<accession>G3V686</accession>
<accession>Q7TN86</accession>
<name>RETNG_RAT</name>
<evidence type="ECO:0000250" key="1">
    <source>
        <dbReference type="UniProtKB" id="Q8K426"/>
    </source>
</evidence>
<evidence type="ECO:0000250" key="2">
    <source>
        <dbReference type="UniProtKB" id="Q99P87"/>
    </source>
</evidence>
<evidence type="ECO:0000255" key="3"/>
<evidence type="ECO:0000269" key="4">
    <source>
    </source>
</evidence>
<evidence type="ECO:0000303" key="5">
    <source>
    </source>
</evidence>
<evidence type="ECO:0000305" key="6"/>
<evidence type="ECO:0000312" key="7">
    <source>
        <dbReference type="EMBL" id="CAD56116.1"/>
    </source>
</evidence>
<evidence type="ECO:0000312" key="8">
    <source>
        <dbReference type="EMBL" id="EDM11108.1"/>
    </source>
</evidence>
<evidence type="ECO:0000312" key="9">
    <source>
        <dbReference type="Proteomes" id="UP000002494"/>
    </source>
</evidence>
<evidence type="ECO:0000312" key="10">
    <source>
        <dbReference type="RGD" id="727934"/>
    </source>
</evidence>
<keyword id="KW-1015">Disulfide bond</keyword>
<keyword id="KW-0372">Hormone</keyword>
<keyword id="KW-1185">Reference proteome</keyword>
<keyword id="KW-0964">Secreted</keyword>
<keyword id="KW-0732">Signal</keyword>
<organism evidence="9">
    <name type="scientific">Rattus norvegicus</name>
    <name type="common">Rat</name>
    <dbReference type="NCBI Taxonomy" id="10116"/>
    <lineage>
        <taxon>Eukaryota</taxon>
        <taxon>Metazoa</taxon>
        <taxon>Chordata</taxon>
        <taxon>Craniata</taxon>
        <taxon>Vertebrata</taxon>
        <taxon>Euteleostomi</taxon>
        <taxon>Mammalia</taxon>
        <taxon>Eutheria</taxon>
        <taxon>Euarchontoglires</taxon>
        <taxon>Glires</taxon>
        <taxon>Rodentia</taxon>
        <taxon>Myomorpha</taxon>
        <taxon>Muroidea</taxon>
        <taxon>Muridae</taxon>
        <taxon>Murinae</taxon>
        <taxon>Rattus</taxon>
    </lineage>
</organism>
<feature type="signal peptide" evidence="3">
    <location>
        <begin position="1"/>
        <end position="23"/>
    </location>
</feature>
<feature type="chain" id="PRO_5009691761" description="Resistin-like gamma">
    <location>
        <begin position="24"/>
        <end position="111"/>
    </location>
</feature>
<feature type="disulfide bond" evidence="2">
    <location>
        <begin position="55"/>
        <end position="108"/>
    </location>
</feature>
<feature type="disulfide bond" evidence="2">
    <location>
        <begin position="67"/>
        <end position="107"/>
    </location>
</feature>
<feature type="disulfide bond" evidence="2">
    <location>
        <begin position="76"/>
        <end position="93"/>
    </location>
</feature>
<feature type="disulfide bond" evidence="2">
    <location>
        <begin position="78"/>
        <end position="95"/>
    </location>
</feature>
<feature type="disulfide bond" evidence="2">
    <location>
        <begin position="82"/>
        <end position="97"/>
    </location>
</feature>
<feature type="sequence conflict" description="In Ref. 1; CAD56116." evidence="6" ref="1">
    <original>I</original>
    <variation>T</variation>
    <location>
        <position position="5"/>
    </location>
</feature>
<feature type="sequence conflict" description="In Ref. 1; CAD56116." evidence="6" ref="1">
    <original>N</original>
    <variation>S</variation>
    <location>
        <position position="22"/>
    </location>
</feature>
<reference evidence="7" key="1">
    <citation type="journal article" date="2003" name="Genomics">
        <title>Identification of RELMgamma, a novel resistin-like molecule with a distinct expression pattern.</title>
        <authorList>
            <person name="Gerstmayer B."/>
            <person name="Kuesters D."/>
            <person name="Gebel S."/>
            <person name="Mueller T."/>
            <person name="Van Miert E."/>
            <person name="Hofmann K."/>
            <person name="Bosio A."/>
        </authorList>
    </citation>
    <scope>NUCLEOTIDE SEQUENCE [MRNA]</scope>
    <scope>TISSUE SPECIFICITY</scope>
    <source>
        <strain evidence="7">Sprague-Dawley</strain>
    </source>
</reference>
<reference evidence="9" key="2">
    <citation type="journal article" date="2004" name="Nature">
        <title>Genome sequence of the Brown Norway rat yields insights into mammalian evolution.</title>
        <authorList>
            <person name="Gibbs R.A."/>
            <person name="Weinstock G.M."/>
            <person name="Metzker M.L."/>
            <person name="Muzny D.M."/>
            <person name="Sodergren E.J."/>
            <person name="Scherer S."/>
            <person name="Scott G."/>
            <person name="Steffen D."/>
            <person name="Worley K.C."/>
            <person name="Burch P.E."/>
            <person name="Okwuonu G."/>
            <person name="Hines S."/>
            <person name="Lewis L."/>
            <person name="Deramo C."/>
            <person name="Delgado O."/>
            <person name="Dugan-Rocha S."/>
            <person name="Miner G."/>
            <person name="Morgan M."/>
            <person name="Hawes A."/>
            <person name="Gill R."/>
            <person name="Holt R.A."/>
            <person name="Adams M.D."/>
            <person name="Amanatides P.G."/>
            <person name="Baden-Tillson H."/>
            <person name="Barnstead M."/>
            <person name="Chin S."/>
            <person name="Evans C.A."/>
            <person name="Ferriera S."/>
            <person name="Fosler C."/>
            <person name="Glodek A."/>
            <person name="Gu Z."/>
            <person name="Jennings D."/>
            <person name="Kraft C.L."/>
            <person name="Nguyen T."/>
            <person name="Pfannkoch C.M."/>
            <person name="Sitter C."/>
            <person name="Sutton G.G."/>
            <person name="Venter J.C."/>
            <person name="Woodage T."/>
            <person name="Smith D."/>
            <person name="Lee H.-M."/>
            <person name="Gustafson E."/>
            <person name="Cahill P."/>
            <person name="Kana A."/>
            <person name="Doucette-Stamm L."/>
            <person name="Weinstock K."/>
            <person name="Fechtel K."/>
            <person name="Weiss R.B."/>
            <person name="Dunn D.M."/>
            <person name="Green E.D."/>
            <person name="Blakesley R.W."/>
            <person name="Bouffard G.G."/>
            <person name="De Jong P.J."/>
            <person name="Osoegawa K."/>
            <person name="Zhu B."/>
            <person name="Marra M."/>
            <person name="Schein J."/>
            <person name="Bosdet I."/>
            <person name="Fjell C."/>
            <person name="Jones S."/>
            <person name="Krzywinski M."/>
            <person name="Mathewson C."/>
            <person name="Siddiqui A."/>
            <person name="Wye N."/>
            <person name="McPherson J."/>
            <person name="Zhao S."/>
            <person name="Fraser C.M."/>
            <person name="Shetty J."/>
            <person name="Shatsman S."/>
            <person name="Geer K."/>
            <person name="Chen Y."/>
            <person name="Abramzon S."/>
            <person name="Nierman W.C."/>
            <person name="Havlak P.H."/>
            <person name="Chen R."/>
            <person name="Durbin K.J."/>
            <person name="Egan A."/>
            <person name="Ren Y."/>
            <person name="Song X.-Z."/>
            <person name="Li B."/>
            <person name="Liu Y."/>
            <person name="Qin X."/>
            <person name="Cawley S."/>
            <person name="Cooney A.J."/>
            <person name="D'Souza L.M."/>
            <person name="Martin K."/>
            <person name="Wu J.Q."/>
            <person name="Gonzalez-Garay M.L."/>
            <person name="Jackson A.R."/>
            <person name="Kalafus K.J."/>
            <person name="McLeod M.P."/>
            <person name="Milosavljevic A."/>
            <person name="Virk D."/>
            <person name="Volkov A."/>
            <person name="Wheeler D.A."/>
            <person name="Zhang Z."/>
            <person name="Bailey J.A."/>
            <person name="Eichler E.E."/>
            <person name="Tuzun E."/>
            <person name="Birney E."/>
            <person name="Mongin E."/>
            <person name="Ureta-Vidal A."/>
            <person name="Woodwark C."/>
            <person name="Zdobnov E."/>
            <person name="Bork P."/>
            <person name="Suyama M."/>
            <person name="Torrents D."/>
            <person name="Alexandersson M."/>
            <person name="Trask B.J."/>
            <person name="Young J.M."/>
            <person name="Huang H."/>
            <person name="Wang H."/>
            <person name="Xing H."/>
            <person name="Daniels S."/>
            <person name="Gietzen D."/>
            <person name="Schmidt J."/>
            <person name="Stevens K."/>
            <person name="Vitt U."/>
            <person name="Wingrove J."/>
            <person name="Camara F."/>
            <person name="Mar Alba M."/>
            <person name="Abril J.F."/>
            <person name="Guigo R."/>
            <person name="Smit A."/>
            <person name="Dubchak I."/>
            <person name="Rubin E.M."/>
            <person name="Couronne O."/>
            <person name="Poliakov A."/>
            <person name="Huebner N."/>
            <person name="Ganten D."/>
            <person name="Goesele C."/>
            <person name="Hummel O."/>
            <person name="Kreitler T."/>
            <person name="Lee Y.-A."/>
            <person name="Monti J."/>
            <person name="Schulz H."/>
            <person name="Zimdahl H."/>
            <person name="Himmelbauer H."/>
            <person name="Lehrach H."/>
            <person name="Jacob H.J."/>
            <person name="Bromberg S."/>
            <person name="Gullings-Handley J."/>
            <person name="Jensen-Seaman M.I."/>
            <person name="Kwitek A.E."/>
            <person name="Lazar J."/>
            <person name="Pasko D."/>
            <person name="Tonellato P.J."/>
            <person name="Twigger S."/>
            <person name="Ponting C.P."/>
            <person name="Duarte J.M."/>
            <person name="Rice S."/>
            <person name="Goodstadt L."/>
            <person name="Beatson S.A."/>
            <person name="Emes R.D."/>
            <person name="Winter E.E."/>
            <person name="Webber C."/>
            <person name="Brandt P."/>
            <person name="Nyakatura G."/>
            <person name="Adetobi M."/>
            <person name="Chiaromonte F."/>
            <person name="Elnitski L."/>
            <person name="Eswara P."/>
            <person name="Hardison R.C."/>
            <person name="Hou M."/>
            <person name="Kolbe D."/>
            <person name="Makova K."/>
            <person name="Miller W."/>
            <person name="Nekrutenko A."/>
            <person name="Riemer C."/>
            <person name="Schwartz S."/>
            <person name="Taylor J."/>
            <person name="Yang S."/>
            <person name="Zhang Y."/>
            <person name="Lindpaintner K."/>
            <person name="Andrews T.D."/>
            <person name="Caccamo M."/>
            <person name="Clamp M."/>
            <person name="Clarke L."/>
            <person name="Curwen V."/>
            <person name="Durbin R.M."/>
            <person name="Eyras E."/>
            <person name="Searle S.M."/>
            <person name="Cooper G.M."/>
            <person name="Batzoglou S."/>
            <person name="Brudno M."/>
            <person name="Sidow A."/>
            <person name="Stone E.A."/>
            <person name="Payseur B.A."/>
            <person name="Bourque G."/>
            <person name="Lopez-Otin C."/>
            <person name="Puente X.S."/>
            <person name="Chakrabarti K."/>
            <person name="Chatterji S."/>
            <person name="Dewey C."/>
            <person name="Pachter L."/>
            <person name="Bray N."/>
            <person name="Yap V.B."/>
            <person name="Caspi A."/>
            <person name="Tesler G."/>
            <person name="Pevzner P.A."/>
            <person name="Haussler D."/>
            <person name="Roskin K.M."/>
            <person name="Baertsch R."/>
            <person name="Clawson H."/>
            <person name="Furey T.S."/>
            <person name="Hinrichs A.S."/>
            <person name="Karolchik D."/>
            <person name="Kent W.J."/>
            <person name="Rosenbloom K.R."/>
            <person name="Trumbower H."/>
            <person name="Weirauch M."/>
            <person name="Cooper D.N."/>
            <person name="Stenson P.D."/>
            <person name="Ma B."/>
            <person name="Brent M."/>
            <person name="Arumugam M."/>
            <person name="Shteynberg D."/>
            <person name="Copley R.R."/>
            <person name="Taylor M.S."/>
            <person name="Riethman H."/>
            <person name="Mudunuri U."/>
            <person name="Peterson J."/>
            <person name="Guyer M."/>
            <person name="Felsenfeld A."/>
            <person name="Old S."/>
            <person name="Mockrin S."/>
            <person name="Collins F.S."/>
        </authorList>
    </citation>
    <scope>NUCLEOTIDE SEQUENCE [LARGE SCALE GENOMIC DNA]</scope>
    <source>
        <strain evidence="9">Brown Norway</strain>
    </source>
</reference>
<reference evidence="8" key="3">
    <citation type="submission" date="2005-07" db="EMBL/GenBank/DDBJ databases">
        <authorList>
            <person name="Mural R.J."/>
            <person name="Adams M.D."/>
            <person name="Myers E.W."/>
            <person name="Smith H.O."/>
            <person name="Venter J.C."/>
        </authorList>
    </citation>
    <scope>NUCLEOTIDE SEQUENCE [LARGE SCALE GENOMIC DNA]</scope>
    <source>
        <strain evidence="8">Brown Norway</strain>
    </source>
</reference>
<protein>
    <recommendedName>
        <fullName evidence="10">Resistin-like gamma</fullName>
    </recommendedName>
    <alternativeName>
        <fullName evidence="5">Resistin-like molecule gamma</fullName>
        <shortName evidence="5">RELMgamma</shortName>
    </alternativeName>
</protein>
<dbReference type="EMBL" id="AJ514932">
    <property type="protein sequence ID" value="CAD56116.1"/>
    <property type="molecule type" value="mRNA"/>
</dbReference>
<dbReference type="EMBL" id="AC130920">
    <property type="status" value="NOT_ANNOTATED_CDS"/>
    <property type="molecule type" value="Genomic_DNA"/>
</dbReference>
<dbReference type="EMBL" id="CH473967">
    <property type="protein sequence ID" value="EDM11108.1"/>
    <property type="molecule type" value="Genomic_DNA"/>
</dbReference>
<dbReference type="RefSeq" id="NP_853656.2">
    <property type="nucleotide sequence ID" value="NM_181625.2"/>
</dbReference>
<dbReference type="RefSeq" id="XP_006248344.1">
    <property type="nucleotide sequence ID" value="XM_006248282.3"/>
</dbReference>
<dbReference type="SMR" id="G3V686"/>
<dbReference type="FunCoup" id="G3V686">
    <property type="interactions" value="2"/>
</dbReference>
<dbReference type="STRING" id="10116.ENSRNOP00000002673"/>
<dbReference type="PaxDb" id="10116-ENSRNOP00000002673"/>
<dbReference type="GeneID" id="288135"/>
<dbReference type="KEGG" id="rno:288135"/>
<dbReference type="AGR" id="RGD:727934"/>
<dbReference type="CTD" id="245195"/>
<dbReference type="RGD" id="727934">
    <property type="gene designation" value="Retnlg"/>
</dbReference>
<dbReference type="VEuPathDB" id="HostDB:ENSRNOG00000001943"/>
<dbReference type="eggNOG" id="ENOG502RTZZ">
    <property type="taxonomic scope" value="Eukaryota"/>
</dbReference>
<dbReference type="HOGENOM" id="CLU_150117_0_0_1"/>
<dbReference type="InParanoid" id="G3V686"/>
<dbReference type="OrthoDB" id="10065422at2759"/>
<dbReference type="PhylomeDB" id="G3V686"/>
<dbReference type="TreeFam" id="TF337024"/>
<dbReference type="PRO" id="PR:G3V686"/>
<dbReference type="Proteomes" id="UP000002494">
    <property type="component" value="Chromosome 11"/>
</dbReference>
<dbReference type="Proteomes" id="UP000234681">
    <property type="component" value="Chromosome 11"/>
</dbReference>
<dbReference type="Bgee" id="ENSRNOG00000001943">
    <property type="expression patterns" value="Expressed in spleen and 17 other cell types or tissues"/>
</dbReference>
<dbReference type="GO" id="GO:0005615">
    <property type="term" value="C:extracellular space"/>
    <property type="evidence" value="ECO:0000318"/>
    <property type="project" value="GO_Central"/>
</dbReference>
<dbReference type="GO" id="GO:0005125">
    <property type="term" value="F:cytokine activity"/>
    <property type="evidence" value="ECO:0000303"/>
    <property type="project" value="RGD"/>
</dbReference>
<dbReference type="GO" id="GO:0005179">
    <property type="term" value="F:hormone activity"/>
    <property type="evidence" value="ECO:0007669"/>
    <property type="project" value="UniProtKB-KW"/>
</dbReference>
<dbReference type="CDD" id="cd16333">
    <property type="entry name" value="RELM"/>
    <property type="match status" value="1"/>
</dbReference>
<dbReference type="FunFam" id="2.60.40.4230:FF:000001">
    <property type="entry name" value="Resistin-like beta"/>
    <property type="match status" value="1"/>
</dbReference>
<dbReference type="Gene3D" id="2.60.40.4230">
    <property type="entry name" value="Resistin head domain"/>
    <property type="match status" value="1"/>
</dbReference>
<dbReference type="InterPro" id="IPR009714">
    <property type="entry name" value="RELM"/>
</dbReference>
<dbReference type="InterPro" id="IPR036262">
    <property type="entry name" value="Resistin-like_sf"/>
</dbReference>
<dbReference type="PANTHER" id="PTHR21101">
    <property type="entry name" value="RESISTIN"/>
    <property type="match status" value="1"/>
</dbReference>
<dbReference type="PANTHER" id="PTHR21101:SF14">
    <property type="entry name" value="RESISTIN-LIKE GAMMA"/>
    <property type="match status" value="1"/>
</dbReference>
<dbReference type="Pfam" id="PF06954">
    <property type="entry name" value="Resistin"/>
    <property type="match status" value="1"/>
</dbReference>
<dbReference type="SUPFAM" id="SSF111423">
    <property type="entry name" value="Resistin"/>
    <property type="match status" value="1"/>
</dbReference>